<sequence>MAVKIRLKRMGAKKTPFYRVVVADSRSPRDGRFIEEIGTYNPVAQPAEVKINEEAALKWLGNGAKPSDTVRNLFSNQGIMEKFHLSKQGK</sequence>
<feature type="chain" id="PRO_1000196333" description="Small ribosomal subunit protein bS16">
    <location>
        <begin position="1"/>
        <end position="90"/>
    </location>
</feature>
<reference key="1">
    <citation type="submission" date="2008-10" db="EMBL/GenBank/DDBJ databases">
        <title>Genome sequence of Bacillus cereus B4264.</title>
        <authorList>
            <person name="Dodson R.J."/>
            <person name="Durkin A.S."/>
            <person name="Rosovitz M.J."/>
            <person name="Rasko D.A."/>
            <person name="Hoffmaster A."/>
            <person name="Ravel J."/>
            <person name="Sutton G."/>
        </authorList>
    </citation>
    <scope>NUCLEOTIDE SEQUENCE [LARGE SCALE GENOMIC DNA]</scope>
    <source>
        <strain>B4264</strain>
    </source>
</reference>
<name>RS16_BACC4</name>
<comment type="similarity">
    <text evidence="1">Belongs to the bacterial ribosomal protein bS16 family.</text>
</comment>
<evidence type="ECO:0000255" key="1">
    <source>
        <dbReference type="HAMAP-Rule" id="MF_00385"/>
    </source>
</evidence>
<evidence type="ECO:0000305" key="2"/>
<proteinExistence type="inferred from homology"/>
<protein>
    <recommendedName>
        <fullName evidence="1">Small ribosomal subunit protein bS16</fullName>
    </recommendedName>
    <alternativeName>
        <fullName evidence="2">30S ribosomal protein S16</fullName>
    </alternativeName>
</protein>
<dbReference type="EMBL" id="CP001176">
    <property type="protein sequence ID" value="ACK63876.1"/>
    <property type="molecule type" value="Genomic_DNA"/>
</dbReference>
<dbReference type="RefSeq" id="WP_000268750.1">
    <property type="nucleotide sequence ID" value="NZ_VEHB01000002.1"/>
</dbReference>
<dbReference type="SMR" id="B7HDW7"/>
<dbReference type="GeneID" id="93007268"/>
<dbReference type="KEGG" id="bcb:BCB4264_A3943"/>
<dbReference type="HOGENOM" id="CLU_100590_5_0_9"/>
<dbReference type="Proteomes" id="UP000007096">
    <property type="component" value="Chromosome"/>
</dbReference>
<dbReference type="GO" id="GO:0005737">
    <property type="term" value="C:cytoplasm"/>
    <property type="evidence" value="ECO:0007669"/>
    <property type="project" value="UniProtKB-ARBA"/>
</dbReference>
<dbReference type="GO" id="GO:0015935">
    <property type="term" value="C:small ribosomal subunit"/>
    <property type="evidence" value="ECO:0007669"/>
    <property type="project" value="TreeGrafter"/>
</dbReference>
<dbReference type="GO" id="GO:0003735">
    <property type="term" value="F:structural constituent of ribosome"/>
    <property type="evidence" value="ECO:0007669"/>
    <property type="project" value="InterPro"/>
</dbReference>
<dbReference type="GO" id="GO:0006412">
    <property type="term" value="P:translation"/>
    <property type="evidence" value="ECO:0007669"/>
    <property type="project" value="UniProtKB-UniRule"/>
</dbReference>
<dbReference type="FunFam" id="3.30.1320.10:FF:000002">
    <property type="entry name" value="30S ribosomal protein S16"/>
    <property type="match status" value="1"/>
</dbReference>
<dbReference type="Gene3D" id="3.30.1320.10">
    <property type="match status" value="1"/>
</dbReference>
<dbReference type="HAMAP" id="MF_00385">
    <property type="entry name" value="Ribosomal_bS16"/>
    <property type="match status" value="1"/>
</dbReference>
<dbReference type="InterPro" id="IPR000307">
    <property type="entry name" value="Ribosomal_bS16"/>
</dbReference>
<dbReference type="InterPro" id="IPR020592">
    <property type="entry name" value="Ribosomal_bS16_CS"/>
</dbReference>
<dbReference type="InterPro" id="IPR023803">
    <property type="entry name" value="Ribosomal_bS16_dom_sf"/>
</dbReference>
<dbReference type="NCBIfam" id="TIGR00002">
    <property type="entry name" value="S16"/>
    <property type="match status" value="1"/>
</dbReference>
<dbReference type="PANTHER" id="PTHR12919">
    <property type="entry name" value="30S RIBOSOMAL PROTEIN S16"/>
    <property type="match status" value="1"/>
</dbReference>
<dbReference type="PANTHER" id="PTHR12919:SF20">
    <property type="entry name" value="SMALL RIBOSOMAL SUBUNIT PROTEIN BS16M"/>
    <property type="match status" value="1"/>
</dbReference>
<dbReference type="Pfam" id="PF00886">
    <property type="entry name" value="Ribosomal_S16"/>
    <property type="match status" value="1"/>
</dbReference>
<dbReference type="SUPFAM" id="SSF54565">
    <property type="entry name" value="Ribosomal protein S16"/>
    <property type="match status" value="1"/>
</dbReference>
<dbReference type="PROSITE" id="PS00732">
    <property type="entry name" value="RIBOSOMAL_S16"/>
    <property type="match status" value="1"/>
</dbReference>
<accession>B7HDW7</accession>
<keyword id="KW-0687">Ribonucleoprotein</keyword>
<keyword id="KW-0689">Ribosomal protein</keyword>
<organism>
    <name type="scientific">Bacillus cereus (strain B4264)</name>
    <dbReference type="NCBI Taxonomy" id="405532"/>
    <lineage>
        <taxon>Bacteria</taxon>
        <taxon>Bacillati</taxon>
        <taxon>Bacillota</taxon>
        <taxon>Bacilli</taxon>
        <taxon>Bacillales</taxon>
        <taxon>Bacillaceae</taxon>
        <taxon>Bacillus</taxon>
        <taxon>Bacillus cereus group</taxon>
    </lineage>
</organism>
<gene>
    <name evidence="1" type="primary">rpsP</name>
    <name type="ordered locus">BCB4264_A3943</name>
</gene>